<accession>A6VLK2</accession>
<sequence length="130" mass="13945">MSMQDPIADMLTRIRNGQAANKVAISMPSSKLKVAIANVLAAEGYIESVKVLEGAKPELEITLKYFQGKPVVESIQRVSRPGLRIYKRKDELPKVMGGLGVAVVSTSKGVMTDRAARQAGLGGEIICYVA</sequence>
<keyword id="KW-1185">Reference proteome</keyword>
<keyword id="KW-0687">Ribonucleoprotein</keyword>
<keyword id="KW-0689">Ribosomal protein</keyword>
<keyword id="KW-0694">RNA-binding</keyword>
<keyword id="KW-0699">rRNA-binding</keyword>
<dbReference type="EMBL" id="CP000746">
    <property type="protein sequence ID" value="ABR73849.1"/>
    <property type="molecule type" value="Genomic_DNA"/>
</dbReference>
<dbReference type="RefSeq" id="WP_005759599.1">
    <property type="nucleotide sequence ID" value="NC_009655.1"/>
</dbReference>
<dbReference type="SMR" id="A6VLK2"/>
<dbReference type="STRING" id="339671.Asuc_0473"/>
<dbReference type="GeneID" id="86156431"/>
<dbReference type="KEGG" id="asu:Asuc_0473"/>
<dbReference type="eggNOG" id="COG0096">
    <property type="taxonomic scope" value="Bacteria"/>
</dbReference>
<dbReference type="HOGENOM" id="CLU_098428_0_0_6"/>
<dbReference type="OrthoDB" id="9802617at2"/>
<dbReference type="Proteomes" id="UP000001114">
    <property type="component" value="Chromosome"/>
</dbReference>
<dbReference type="GO" id="GO:1990904">
    <property type="term" value="C:ribonucleoprotein complex"/>
    <property type="evidence" value="ECO:0007669"/>
    <property type="project" value="UniProtKB-KW"/>
</dbReference>
<dbReference type="GO" id="GO:0005840">
    <property type="term" value="C:ribosome"/>
    <property type="evidence" value="ECO:0007669"/>
    <property type="project" value="UniProtKB-KW"/>
</dbReference>
<dbReference type="GO" id="GO:0019843">
    <property type="term" value="F:rRNA binding"/>
    <property type="evidence" value="ECO:0007669"/>
    <property type="project" value="UniProtKB-UniRule"/>
</dbReference>
<dbReference type="GO" id="GO:0003735">
    <property type="term" value="F:structural constituent of ribosome"/>
    <property type="evidence" value="ECO:0007669"/>
    <property type="project" value="InterPro"/>
</dbReference>
<dbReference type="GO" id="GO:0006412">
    <property type="term" value="P:translation"/>
    <property type="evidence" value="ECO:0007669"/>
    <property type="project" value="UniProtKB-UniRule"/>
</dbReference>
<dbReference type="FunFam" id="3.30.1370.30:FF:000003">
    <property type="entry name" value="30S ribosomal protein S8"/>
    <property type="match status" value="1"/>
</dbReference>
<dbReference type="FunFam" id="3.30.1490.10:FF:000001">
    <property type="entry name" value="30S ribosomal protein S8"/>
    <property type="match status" value="1"/>
</dbReference>
<dbReference type="Gene3D" id="3.30.1370.30">
    <property type="match status" value="1"/>
</dbReference>
<dbReference type="Gene3D" id="3.30.1490.10">
    <property type="match status" value="1"/>
</dbReference>
<dbReference type="HAMAP" id="MF_01302_B">
    <property type="entry name" value="Ribosomal_uS8_B"/>
    <property type="match status" value="1"/>
</dbReference>
<dbReference type="InterPro" id="IPR000630">
    <property type="entry name" value="Ribosomal_uS8"/>
</dbReference>
<dbReference type="InterPro" id="IPR047863">
    <property type="entry name" value="Ribosomal_uS8_CS"/>
</dbReference>
<dbReference type="InterPro" id="IPR035987">
    <property type="entry name" value="Ribosomal_uS8_sf"/>
</dbReference>
<dbReference type="NCBIfam" id="NF001109">
    <property type="entry name" value="PRK00136.1"/>
    <property type="match status" value="1"/>
</dbReference>
<dbReference type="PANTHER" id="PTHR11758">
    <property type="entry name" value="40S RIBOSOMAL PROTEIN S15A"/>
    <property type="match status" value="1"/>
</dbReference>
<dbReference type="Pfam" id="PF00410">
    <property type="entry name" value="Ribosomal_S8"/>
    <property type="match status" value="1"/>
</dbReference>
<dbReference type="SUPFAM" id="SSF56047">
    <property type="entry name" value="Ribosomal protein S8"/>
    <property type="match status" value="1"/>
</dbReference>
<dbReference type="PROSITE" id="PS00053">
    <property type="entry name" value="RIBOSOMAL_S8"/>
    <property type="match status" value="1"/>
</dbReference>
<gene>
    <name evidence="1" type="primary">rpsH</name>
    <name type="ordered locus">Asuc_0473</name>
</gene>
<evidence type="ECO:0000255" key="1">
    <source>
        <dbReference type="HAMAP-Rule" id="MF_01302"/>
    </source>
</evidence>
<evidence type="ECO:0000305" key="2"/>
<reference key="1">
    <citation type="journal article" date="2010" name="BMC Genomics">
        <title>A genomic perspective on the potential of Actinobacillus succinogenes for industrial succinate production.</title>
        <authorList>
            <person name="McKinlay J.B."/>
            <person name="Laivenieks M."/>
            <person name="Schindler B.D."/>
            <person name="McKinlay A.A."/>
            <person name="Siddaramappa S."/>
            <person name="Challacombe J.F."/>
            <person name="Lowry S.R."/>
            <person name="Clum A."/>
            <person name="Lapidus A.L."/>
            <person name="Burkhart K.B."/>
            <person name="Harkins V."/>
            <person name="Vieille C."/>
        </authorList>
    </citation>
    <scope>NUCLEOTIDE SEQUENCE [LARGE SCALE GENOMIC DNA]</scope>
    <source>
        <strain>ATCC 55618 / DSM 22257 / CCUG 43843 / 130Z</strain>
    </source>
</reference>
<feature type="chain" id="PRO_1000073188" description="Small ribosomal subunit protein uS8">
    <location>
        <begin position="1"/>
        <end position="130"/>
    </location>
</feature>
<protein>
    <recommendedName>
        <fullName evidence="1">Small ribosomal subunit protein uS8</fullName>
    </recommendedName>
    <alternativeName>
        <fullName evidence="2">30S ribosomal protein S8</fullName>
    </alternativeName>
</protein>
<proteinExistence type="inferred from homology"/>
<organism>
    <name type="scientific">Actinobacillus succinogenes (strain ATCC 55618 / DSM 22257 / CCUG 43843 / 130Z)</name>
    <dbReference type="NCBI Taxonomy" id="339671"/>
    <lineage>
        <taxon>Bacteria</taxon>
        <taxon>Pseudomonadati</taxon>
        <taxon>Pseudomonadota</taxon>
        <taxon>Gammaproteobacteria</taxon>
        <taxon>Pasteurellales</taxon>
        <taxon>Pasteurellaceae</taxon>
        <taxon>Actinobacillus</taxon>
    </lineage>
</organism>
<comment type="function">
    <text evidence="1">One of the primary rRNA binding proteins, it binds directly to 16S rRNA central domain where it helps coordinate assembly of the platform of the 30S subunit.</text>
</comment>
<comment type="subunit">
    <text evidence="1">Part of the 30S ribosomal subunit. Contacts proteins S5 and S12.</text>
</comment>
<comment type="similarity">
    <text evidence="1">Belongs to the universal ribosomal protein uS8 family.</text>
</comment>
<name>RS8_ACTSZ</name>